<reference key="1">
    <citation type="submission" date="2008-04" db="EMBL/GenBank/DDBJ databases">
        <title>Complete sequence of chromosome of Natranaerobius thermophilus JW/NM-WN-LF.</title>
        <authorList>
            <consortium name="US DOE Joint Genome Institute"/>
            <person name="Copeland A."/>
            <person name="Lucas S."/>
            <person name="Lapidus A."/>
            <person name="Glavina del Rio T."/>
            <person name="Dalin E."/>
            <person name="Tice H."/>
            <person name="Bruce D."/>
            <person name="Goodwin L."/>
            <person name="Pitluck S."/>
            <person name="Chertkov O."/>
            <person name="Brettin T."/>
            <person name="Detter J.C."/>
            <person name="Han C."/>
            <person name="Kuske C.R."/>
            <person name="Schmutz J."/>
            <person name="Larimer F."/>
            <person name="Land M."/>
            <person name="Hauser L."/>
            <person name="Kyrpides N."/>
            <person name="Lykidis A."/>
            <person name="Mesbah N.M."/>
            <person name="Wiegel J."/>
        </authorList>
    </citation>
    <scope>NUCLEOTIDE SEQUENCE [LARGE SCALE GENOMIC DNA]</scope>
    <source>
        <strain>ATCC BAA-1301 / DSM 18059 / JW/NM-WN-LF</strain>
    </source>
</reference>
<accession>B2A252</accession>
<proteinExistence type="inferred from homology"/>
<evidence type="ECO:0000255" key="1">
    <source>
        <dbReference type="HAMAP-Rule" id="MF_01867"/>
    </source>
</evidence>
<name>BSHC_NATTJ</name>
<gene>
    <name evidence="1" type="primary">bshC</name>
    <name type="ordered locus">Nther_1274</name>
</gene>
<sequence length="544" mass="63843">MFQNEVTFNEDMGSQVYLDYLYNFDPLKDFFELSPWQESSFEKQAKKLQEREANRRTFRNQLTLGLHNYHKKFTDNPKVYNTIELLNDPETMTVVTGQQPGIMTGPLFAIYKIITAIKLSKKLSKNLDANVIPIFWICSDDHDFQEVNWLKTVDHKGEQLLYEIHDDKEGFSIGDRDIKHKSQDLLDKLAQQLQDSPYYDKWMTLFSKTLEQSKTLADWTAAIILELFGNEGVLVIDPMKPVFRQLSKPIFSKALDLGEGLHNSIDSQTEKLNNRGYSGQVDLRVNHSGLFYYYQGIRSPLTVEGDQFLLANLGIEKSKEDLVRELESDPAKFSPNVTLWPVLQDFLLPSLAYVAGPGEISYFAQLKQIYEQFEIGMPVIYPRESYLLLESDVKSILEKYQIGPENIFYDWPTTRKRVFRELAPINTEKVLNDTCRTIKEEHEKFIQELSRLDEKIYDFEEKNFHLIYRQLYYLKEKGDQYFRRQQLQAQRDLDYSKIKIYPLDKLQEREYNIGEFLCKYDSSVLKKLLKTPLNPQKISVVDLE</sequence>
<organism>
    <name type="scientific">Natranaerobius thermophilus (strain ATCC BAA-1301 / DSM 18059 / JW/NM-WN-LF)</name>
    <dbReference type="NCBI Taxonomy" id="457570"/>
    <lineage>
        <taxon>Bacteria</taxon>
        <taxon>Bacillati</taxon>
        <taxon>Bacillota</taxon>
        <taxon>Clostridia</taxon>
        <taxon>Natranaerobiales</taxon>
        <taxon>Natranaerobiaceae</taxon>
        <taxon>Natranaerobius</taxon>
    </lineage>
</organism>
<protein>
    <recommendedName>
        <fullName evidence="1">Putative cysteine ligase BshC</fullName>
        <ecNumber evidence="1">6.-.-.-</ecNumber>
    </recommendedName>
</protein>
<dbReference type="EC" id="6.-.-.-" evidence="1"/>
<dbReference type="EMBL" id="CP001034">
    <property type="protein sequence ID" value="ACB84857.1"/>
    <property type="molecule type" value="Genomic_DNA"/>
</dbReference>
<dbReference type="RefSeq" id="WP_012447732.1">
    <property type="nucleotide sequence ID" value="NC_010718.1"/>
</dbReference>
<dbReference type="SMR" id="B2A252"/>
<dbReference type="FunCoup" id="B2A252">
    <property type="interactions" value="9"/>
</dbReference>
<dbReference type="STRING" id="457570.Nther_1274"/>
<dbReference type="KEGG" id="nth:Nther_1274"/>
<dbReference type="eggNOG" id="COG4365">
    <property type="taxonomic scope" value="Bacteria"/>
</dbReference>
<dbReference type="HOGENOM" id="CLU_022249_1_0_9"/>
<dbReference type="InParanoid" id="B2A252"/>
<dbReference type="OrthoDB" id="9765151at2"/>
<dbReference type="Proteomes" id="UP000001683">
    <property type="component" value="Chromosome"/>
</dbReference>
<dbReference type="GO" id="GO:0016874">
    <property type="term" value="F:ligase activity"/>
    <property type="evidence" value="ECO:0007669"/>
    <property type="project" value="UniProtKB-UniRule"/>
</dbReference>
<dbReference type="HAMAP" id="MF_01867">
    <property type="entry name" value="BshC"/>
    <property type="match status" value="1"/>
</dbReference>
<dbReference type="InterPro" id="IPR011199">
    <property type="entry name" value="Bacillithiol_biosynth_BshC"/>
</dbReference>
<dbReference type="InterPro" id="IPR055399">
    <property type="entry name" value="CC_BshC"/>
</dbReference>
<dbReference type="InterPro" id="IPR055398">
    <property type="entry name" value="Rossmann-like_BshC"/>
</dbReference>
<dbReference type="NCBIfam" id="TIGR03998">
    <property type="entry name" value="thiol_BshC"/>
    <property type="match status" value="1"/>
</dbReference>
<dbReference type="Pfam" id="PF24850">
    <property type="entry name" value="CC_BshC"/>
    <property type="match status" value="1"/>
</dbReference>
<dbReference type="Pfam" id="PF10079">
    <property type="entry name" value="Rossmann-like_BshC"/>
    <property type="match status" value="1"/>
</dbReference>
<dbReference type="PIRSF" id="PIRSF012535">
    <property type="entry name" value="UCP012535"/>
    <property type="match status" value="1"/>
</dbReference>
<comment type="function">
    <text evidence="1">Involved in bacillithiol (BSH) biosynthesis. May catalyze the last step of the pathway, the addition of cysteine to glucosamine malate (GlcN-Mal) to generate BSH.</text>
</comment>
<comment type="similarity">
    <text evidence="1">Belongs to the BshC family.</text>
</comment>
<keyword id="KW-0175">Coiled coil</keyword>
<keyword id="KW-0436">Ligase</keyword>
<keyword id="KW-1185">Reference proteome</keyword>
<feature type="chain" id="PRO_0000378244" description="Putative cysteine ligase BshC">
    <location>
        <begin position="1"/>
        <end position="544"/>
    </location>
</feature>
<feature type="coiled-coil region" evidence="1">
    <location>
        <begin position="431"/>
        <end position="463"/>
    </location>
</feature>